<protein>
    <recommendedName>
        <fullName evidence="1">Aspartate carbamoyltransferase regulatory chain</fullName>
    </recommendedName>
</protein>
<accession>C3MW46</accession>
<organism>
    <name type="scientific">Saccharolobus islandicus (strain M.14.25 / Kamchatka #1)</name>
    <name type="common">Sulfolobus islandicus</name>
    <dbReference type="NCBI Taxonomy" id="427317"/>
    <lineage>
        <taxon>Archaea</taxon>
        <taxon>Thermoproteota</taxon>
        <taxon>Thermoprotei</taxon>
        <taxon>Sulfolobales</taxon>
        <taxon>Sulfolobaceae</taxon>
        <taxon>Saccharolobus</taxon>
    </lineage>
</organism>
<comment type="function">
    <text evidence="1">Involved in allosteric regulation of aspartate carbamoyltransferase.</text>
</comment>
<comment type="cofactor">
    <cofactor evidence="1">
        <name>Zn(2+)</name>
        <dbReference type="ChEBI" id="CHEBI:29105"/>
    </cofactor>
    <text evidence="1">Binds 1 zinc ion per subunit.</text>
</comment>
<comment type="subunit">
    <text evidence="1">Contains catalytic and regulatory chains.</text>
</comment>
<comment type="similarity">
    <text evidence="1">Belongs to the PyrI family.</text>
</comment>
<name>PYRI_SACI4</name>
<proteinExistence type="inferred from homology"/>
<evidence type="ECO:0000255" key="1">
    <source>
        <dbReference type="HAMAP-Rule" id="MF_00002"/>
    </source>
</evidence>
<reference key="1">
    <citation type="journal article" date="2009" name="Proc. Natl. Acad. Sci. U.S.A.">
        <title>Biogeography of the Sulfolobus islandicus pan-genome.</title>
        <authorList>
            <person name="Reno M.L."/>
            <person name="Held N.L."/>
            <person name="Fields C.J."/>
            <person name="Burke P.V."/>
            <person name="Whitaker R.J."/>
        </authorList>
    </citation>
    <scope>NUCLEOTIDE SEQUENCE [LARGE SCALE GENOMIC DNA]</scope>
    <source>
        <strain>M.14.25 / Kamchatka #1</strain>
    </source>
</reference>
<gene>
    <name evidence="1" type="primary">pyrI</name>
    <name type="ordered locus">M1425_1519</name>
</gene>
<dbReference type="EMBL" id="CP001400">
    <property type="protein sequence ID" value="ACP38268.1"/>
    <property type="molecule type" value="Genomic_DNA"/>
</dbReference>
<dbReference type="RefSeq" id="WP_012711513.1">
    <property type="nucleotide sequence ID" value="NC_012588.1"/>
</dbReference>
<dbReference type="SMR" id="C3MW46"/>
<dbReference type="GeneID" id="84053119"/>
<dbReference type="KEGG" id="sia:M1425_1519"/>
<dbReference type="HOGENOM" id="CLU_128576_0_0_2"/>
<dbReference type="Proteomes" id="UP000001350">
    <property type="component" value="Chromosome"/>
</dbReference>
<dbReference type="GO" id="GO:0009347">
    <property type="term" value="C:aspartate carbamoyltransferase complex"/>
    <property type="evidence" value="ECO:0007669"/>
    <property type="project" value="InterPro"/>
</dbReference>
<dbReference type="GO" id="GO:0046872">
    <property type="term" value="F:metal ion binding"/>
    <property type="evidence" value="ECO:0007669"/>
    <property type="project" value="UniProtKB-KW"/>
</dbReference>
<dbReference type="GO" id="GO:0006207">
    <property type="term" value="P:'de novo' pyrimidine nucleobase biosynthetic process"/>
    <property type="evidence" value="ECO:0007669"/>
    <property type="project" value="InterPro"/>
</dbReference>
<dbReference type="GO" id="GO:0006221">
    <property type="term" value="P:pyrimidine nucleotide biosynthetic process"/>
    <property type="evidence" value="ECO:0007669"/>
    <property type="project" value="UniProtKB-UniRule"/>
</dbReference>
<dbReference type="Gene3D" id="2.30.30.20">
    <property type="entry name" value="Aspartate carbamoyltransferase regulatory subunit, C-terminal domain"/>
    <property type="match status" value="1"/>
</dbReference>
<dbReference type="Gene3D" id="3.30.70.140">
    <property type="entry name" value="Aspartate carbamoyltransferase regulatory subunit, N-terminal domain"/>
    <property type="match status" value="1"/>
</dbReference>
<dbReference type="HAMAP" id="MF_00002">
    <property type="entry name" value="Asp_carb_tr_reg"/>
    <property type="match status" value="1"/>
</dbReference>
<dbReference type="InterPro" id="IPR020545">
    <property type="entry name" value="Asp_carbamoyltransf_reg_N"/>
</dbReference>
<dbReference type="InterPro" id="IPR002801">
    <property type="entry name" value="Asp_carbamoylTrfase_reg"/>
</dbReference>
<dbReference type="InterPro" id="IPR020542">
    <property type="entry name" value="Asp_carbamoyltrfase_reg_C"/>
</dbReference>
<dbReference type="InterPro" id="IPR036792">
    <property type="entry name" value="Asp_carbatrfase_reg_C_sf"/>
</dbReference>
<dbReference type="InterPro" id="IPR036793">
    <property type="entry name" value="Asp_carbatrfase_reg_N_sf"/>
</dbReference>
<dbReference type="NCBIfam" id="TIGR00240">
    <property type="entry name" value="ATCase_reg"/>
    <property type="match status" value="1"/>
</dbReference>
<dbReference type="PANTHER" id="PTHR35805">
    <property type="entry name" value="ASPARTATE CARBAMOYLTRANSFERASE REGULATORY CHAIN"/>
    <property type="match status" value="1"/>
</dbReference>
<dbReference type="PANTHER" id="PTHR35805:SF1">
    <property type="entry name" value="ASPARTATE CARBAMOYLTRANSFERASE REGULATORY CHAIN"/>
    <property type="match status" value="1"/>
</dbReference>
<dbReference type="Pfam" id="PF01948">
    <property type="entry name" value="PyrI"/>
    <property type="match status" value="1"/>
</dbReference>
<dbReference type="Pfam" id="PF02748">
    <property type="entry name" value="PyrI_C"/>
    <property type="match status" value="1"/>
</dbReference>
<dbReference type="SUPFAM" id="SSF57825">
    <property type="entry name" value="Aspartate carbamoyltransferase, Regulatory-chain, C-terminal domain"/>
    <property type="match status" value="1"/>
</dbReference>
<dbReference type="SUPFAM" id="SSF54893">
    <property type="entry name" value="Aspartate carbamoyltransferase, Regulatory-chain, N-terminal domain"/>
    <property type="match status" value="1"/>
</dbReference>
<feature type="chain" id="PRO_1000201617" description="Aspartate carbamoyltransferase regulatory chain">
    <location>
        <begin position="1"/>
        <end position="159"/>
    </location>
</feature>
<feature type="binding site" evidence="1">
    <location>
        <position position="113"/>
    </location>
    <ligand>
        <name>Zn(2+)</name>
        <dbReference type="ChEBI" id="CHEBI:29105"/>
    </ligand>
</feature>
<feature type="binding site" evidence="1">
    <location>
        <position position="118"/>
    </location>
    <ligand>
        <name>Zn(2+)</name>
        <dbReference type="ChEBI" id="CHEBI:29105"/>
    </ligand>
</feature>
<feature type="binding site" evidence="1">
    <location>
        <position position="142"/>
    </location>
    <ligand>
        <name>Zn(2+)</name>
        <dbReference type="ChEBI" id="CHEBI:29105"/>
    </ligand>
</feature>
<feature type="binding site" evidence="1">
    <location>
        <position position="145"/>
    </location>
    <ligand>
        <name>Zn(2+)</name>
        <dbReference type="ChEBI" id="CHEBI:29105"/>
    </ligand>
</feature>
<sequence length="159" mass="17981">MISSSKRDELIVSKIRKGTVIDHIPAGRALAVLRILGIRGSEGYRVALVMNVESKKIGRKDIVKIEDRVIDEKEASLITLIAPSATINIIRDYVVTEKRHLEVPKQIRGLIKCPNPQCITNNDVEAESRFTTISIKPLKLKCEYCEIYITEEDVIRQIL</sequence>
<keyword id="KW-0479">Metal-binding</keyword>
<keyword id="KW-0665">Pyrimidine biosynthesis</keyword>
<keyword id="KW-0862">Zinc</keyword>